<accession>Q4X161</accession>
<sequence length="271" mass="30035">MAFPLPRGITPPEIAFLAEMEMVTILPRQRLEGLELLGGQVEPLLPPRRASLPLWLALLLKRQRRANILPPAWLHPEPLSLILEIETQHHEYENAFSPPPPLPGQPSVRDRNRGQRPIARARHTPDGQRYFPSPPFLPQNIAQDNAHPSEPPSLPYHWLEVGNMLLDAASDDLVDPDQIRRLLKELREVRMAKIRSGVDVLDAAATGGGGVALTGVGAMEIGESRGFVTGVVDGLRKIGASKEQARREQMAEEMANGGYDATQDDEDEMEF</sequence>
<name>PSF2_ASPFU</name>
<evidence type="ECO:0000250" key="1"/>
<evidence type="ECO:0000256" key="2">
    <source>
        <dbReference type="SAM" id="MobiDB-lite"/>
    </source>
</evidence>
<evidence type="ECO:0000305" key="3"/>
<protein>
    <recommendedName>
        <fullName>DNA replication complex GINS protein psf2</fullName>
    </recommendedName>
</protein>
<keyword id="KW-0159">Chromosome partition</keyword>
<keyword id="KW-0235">DNA replication</keyword>
<keyword id="KW-0539">Nucleus</keyword>
<keyword id="KW-1185">Reference proteome</keyword>
<comment type="function">
    <text evidence="1">The GINS complex plays an essential role in the initiation of DNA replication. Has a role in chromosome segregation (By similarity).</text>
</comment>
<comment type="subunit">
    <text evidence="1">Component of the GINS complex which is a heterotetramer of sld5, psf1, psf2 and psf3.</text>
</comment>
<comment type="subcellular location">
    <subcellularLocation>
        <location evidence="1">Nucleus</location>
    </subcellularLocation>
</comment>
<comment type="similarity">
    <text evidence="3">Belongs to the GINS2/PSF2 family.</text>
</comment>
<gene>
    <name type="primary">psf2</name>
    <name type="ORF">AFUA_2G11090</name>
</gene>
<reference key="1">
    <citation type="journal article" date="2005" name="Nature">
        <title>Genomic sequence of the pathogenic and allergenic filamentous fungus Aspergillus fumigatus.</title>
        <authorList>
            <person name="Nierman W.C."/>
            <person name="Pain A."/>
            <person name="Anderson M.J."/>
            <person name="Wortman J.R."/>
            <person name="Kim H.S."/>
            <person name="Arroyo J."/>
            <person name="Berriman M."/>
            <person name="Abe K."/>
            <person name="Archer D.B."/>
            <person name="Bermejo C."/>
            <person name="Bennett J.W."/>
            <person name="Bowyer P."/>
            <person name="Chen D."/>
            <person name="Collins M."/>
            <person name="Coulsen R."/>
            <person name="Davies R."/>
            <person name="Dyer P.S."/>
            <person name="Farman M.L."/>
            <person name="Fedorova N."/>
            <person name="Fedorova N.D."/>
            <person name="Feldblyum T.V."/>
            <person name="Fischer R."/>
            <person name="Fosker N."/>
            <person name="Fraser A."/>
            <person name="Garcia J.L."/>
            <person name="Garcia M.J."/>
            <person name="Goble A."/>
            <person name="Goldman G.H."/>
            <person name="Gomi K."/>
            <person name="Griffith-Jones S."/>
            <person name="Gwilliam R."/>
            <person name="Haas B.J."/>
            <person name="Haas H."/>
            <person name="Harris D.E."/>
            <person name="Horiuchi H."/>
            <person name="Huang J."/>
            <person name="Humphray S."/>
            <person name="Jimenez J."/>
            <person name="Keller N."/>
            <person name="Khouri H."/>
            <person name="Kitamoto K."/>
            <person name="Kobayashi T."/>
            <person name="Konzack S."/>
            <person name="Kulkarni R."/>
            <person name="Kumagai T."/>
            <person name="Lafton A."/>
            <person name="Latge J.-P."/>
            <person name="Li W."/>
            <person name="Lord A."/>
            <person name="Lu C."/>
            <person name="Majoros W.H."/>
            <person name="May G.S."/>
            <person name="Miller B.L."/>
            <person name="Mohamoud Y."/>
            <person name="Molina M."/>
            <person name="Monod M."/>
            <person name="Mouyna I."/>
            <person name="Mulligan S."/>
            <person name="Murphy L.D."/>
            <person name="O'Neil S."/>
            <person name="Paulsen I."/>
            <person name="Penalva M.A."/>
            <person name="Pertea M."/>
            <person name="Price C."/>
            <person name="Pritchard B.L."/>
            <person name="Quail M.A."/>
            <person name="Rabbinowitsch E."/>
            <person name="Rawlins N."/>
            <person name="Rajandream M.A."/>
            <person name="Reichard U."/>
            <person name="Renauld H."/>
            <person name="Robson G.D."/>
            <person name="Rodriguez de Cordoba S."/>
            <person name="Rodriguez-Pena J.M."/>
            <person name="Ronning C.M."/>
            <person name="Rutter S."/>
            <person name="Salzberg S.L."/>
            <person name="Sanchez M."/>
            <person name="Sanchez-Ferrero J.C."/>
            <person name="Saunders D."/>
            <person name="Seeger K."/>
            <person name="Squares R."/>
            <person name="Squares S."/>
            <person name="Takeuchi M."/>
            <person name="Tekaia F."/>
            <person name="Turner G."/>
            <person name="Vazquez de Aldana C.R."/>
            <person name="Weidman J."/>
            <person name="White O."/>
            <person name="Woodward J.R."/>
            <person name="Yu J.-H."/>
            <person name="Fraser C.M."/>
            <person name="Galagan J.E."/>
            <person name="Asai K."/>
            <person name="Machida M."/>
            <person name="Hall N."/>
            <person name="Barrell B.G."/>
            <person name="Denning D.W."/>
        </authorList>
    </citation>
    <scope>NUCLEOTIDE SEQUENCE [LARGE SCALE GENOMIC DNA]</scope>
    <source>
        <strain>ATCC MYA-4609 / CBS 101355 / FGSC A1100 / Af293</strain>
    </source>
</reference>
<feature type="chain" id="PRO_0000278407" description="DNA replication complex GINS protein psf2">
    <location>
        <begin position="1"/>
        <end position="271"/>
    </location>
</feature>
<feature type="region of interest" description="Disordered" evidence="2">
    <location>
        <begin position="93"/>
        <end position="130"/>
    </location>
</feature>
<feature type="region of interest" description="Disordered" evidence="2">
    <location>
        <begin position="243"/>
        <end position="271"/>
    </location>
</feature>
<feature type="compositionally biased region" description="Acidic residues" evidence="2">
    <location>
        <begin position="262"/>
        <end position="271"/>
    </location>
</feature>
<organism>
    <name type="scientific">Aspergillus fumigatus (strain ATCC MYA-4609 / CBS 101355 / FGSC A1100 / Af293)</name>
    <name type="common">Neosartorya fumigata</name>
    <dbReference type="NCBI Taxonomy" id="330879"/>
    <lineage>
        <taxon>Eukaryota</taxon>
        <taxon>Fungi</taxon>
        <taxon>Dikarya</taxon>
        <taxon>Ascomycota</taxon>
        <taxon>Pezizomycotina</taxon>
        <taxon>Eurotiomycetes</taxon>
        <taxon>Eurotiomycetidae</taxon>
        <taxon>Eurotiales</taxon>
        <taxon>Aspergillaceae</taxon>
        <taxon>Aspergillus</taxon>
        <taxon>Aspergillus subgen. Fumigati</taxon>
    </lineage>
</organism>
<proteinExistence type="inferred from homology"/>
<dbReference type="EMBL" id="AAHF01000001">
    <property type="protein sequence ID" value="EAL93404.1"/>
    <property type="molecule type" value="Genomic_DNA"/>
</dbReference>
<dbReference type="RefSeq" id="XP_755442.1">
    <property type="nucleotide sequence ID" value="XM_750349.1"/>
</dbReference>
<dbReference type="SMR" id="Q4X161"/>
<dbReference type="FunCoup" id="Q4X161">
    <property type="interactions" value="698"/>
</dbReference>
<dbReference type="STRING" id="330879.Q4X161"/>
<dbReference type="EnsemblFungi" id="EAL93404">
    <property type="protein sequence ID" value="EAL93404"/>
    <property type="gene ID" value="AFUA_2G11090"/>
</dbReference>
<dbReference type="GeneID" id="3513378"/>
<dbReference type="KEGG" id="afm:AFUA_2G11090"/>
<dbReference type="VEuPathDB" id="FungiDB:Afu2g11090"/>
<dbReference type="eggNOG" id="KOG4071">
    <property type="taxonomic scope" value="Eukaryota"/>
</dbReference>
<dbReference type="HOGENOM" id="CLU_078274_0_0_1"/>
<dbReference type="InParanoid" id="Q4X161"/>
<dbReference type="OMA" id="DSLNCMY"/>
<dbReference type="OrthoDB" id="1938138at2759"/>
<dbReference type="Proteomes" id="UP000002530">
    <property type="component" value="Chromosome 2"/>
</dbReference>
<dbReference type="GO" id="GO:0000811">
    <property type="term" value="C:GINS complex"/>
    <property type="evidence" value="ECO:0000318"/>
    <property type="project" value="GO_Central"/>
</dbReference>
<dbReference type="GO" id="GO:0007059">
    <property type="term" value="P:chromosome segregation"/>
    <property type="evidence" value="ECO:0007669"/>
    <property type="project" value="UniProtKB-KW"/>
</dbReference>
<dbReference type="GO" id="GO:0006260">
    <property type="term" value="P:DNA replication"/>
    <property type="evidence" value="ECO:0007669"/>
    <property type="project" value="UniProtKB-KW"/>
</dbReference>
<dbReference type="GO" id="GO:0000727">
    <property type="term" value="P:double-strand break repair via break-induced replication"/>
    <property type="evidence" value="ECO:0000318"/>
    <property type="project" value="GO_Central"/>
</dbReference>
<dbReference type="CDD" id="cd11712">
    <property type="entry name" value="GINS_A_psf2"/>
    <property type="match status" value="1"/>
</dbReference>
<dbReference type="CDD" id="cd21694">
    <property type="entry name" value="GINS_B_Psf2"/>
    <property type="match status" value="1"/>
</dbReference>
<dbReference type="FunFam" id="1.20.58.1020:FF:000001">
    <property type="entry name" value="DNA replication complex GINS protein PSF2"/>
    <property type="match status" value="1"/>
</dbReference>
<dbReference type="FunFam" id="3.40.5.50:FF:000001">
    <property type="entry name" value="DNA replication complex GINS protein PSF2"/>
    <property type="match status" value="1"/>
</dbReference>
<dbReference type="Gene3D" id="1.20.58.1020">
    <property type="match status" value="1"/>
</dbReference>
<dbReference type="Gene3D" id="3.40.5.50">
    <property type="match status" value="1"/>
</dbReference>
<dbReference type="InterPro" id="IPR021151">
    <property type="entry name" value="GINS_A"/>
</dbReference>
<dbReference type="InterPro" id="IPR036224">
    <property type="entry name" value="GINS_bundle-like_dom_sf"/>
</dbReference>
<dbReference type="InterPro" id="IPR007257">
    <property type="entry name" value="GINS_Psf2"/>
</dbReference>
<dbReference type="InterPro" id="IPR056784">
    <property type="entry name" value="PSF2_N"/>
</dbReference>
<dbReference type="PANTHER" id="PTHR12772">
    <property type="entry name" value="DNA REPLICATION COMPLEX GINS PROTEIN PSF2"/>
    <property type="match status" value="1"/>
</dbReference>
<dbReference type="PANTHER" id="PTHR12772:SF0">
    <property type="entry name" value="DNA REPLICATION COMPLEX GINS PROTEIN PSF2"/>
    <property type="match status" value="1"/>
</dbReference>
<dbReference type="Pfam" id="PF25005">
    <property type="entry name" value="PSF2_N"/>
    <property type="match status" value="1"/>
</dbReference>
<dbReference type="Pfam" id="PF05916">
    <property type="entry name" value="Sld5"/>
    <property type="match status" value="1"/>
</dbReference>
<dbReference type="PIRSF" id="PIRSF028998">
    <property type="entry name" value="GINS_Psf2_subgr"/>
    <property type="match status" value="1"/>
</dbReference>
<dbReference type="SUPFAM" id="SSF158573">
    <property type="entry name" value="GINS helical bundle-like"/>
    <property type="match status" value="1"/>
</dbReference>
<dbReference type="SUPFAM" id="SSF160059">
    <property type="entry name" value="PriA/YqbF domain"/>
    <property type="match status" value="1"/>
</dbReference>